<name>SDRM_STAAN</name>
<organism>
    <name type="scientific">Staphylococcus aureus (strain N315)</name>
    <dbReference type="NCBI Taxonomy" id="158879"/>
    <lineage>
        <taxon>Bacteria</taxon>
        <taxon>Bacillati</taxon>
        <taxon>Bacillota</taxon>
        <taxon>Bacilli</taxon>
        <taxon>Bacillales</taxon>
        <taxon>Staphylococcaceae</taxon>
        <taxon>Staphylococcus</taxon>
    </lineage>
</organism>
<comment type="function">
    <text evidence="2">Energy-dependent drug efflux pump that increases resistance to antimicrobial agents such as norfloxacin, acriflavine and ethidium bromide.</text>
</comment>
<comment type="subcellular location">
    <subcellularLocation>
        <location evidence="4">Cell membrane</location>
        <topology evidence="1">Multi-pass membrane protein</topology>
    </subcellularLocation>
</comment>
<comment type="induction">
    <text evidence="2">Not expressed constitutively.</text>
</comment>
<comment type="similarity">
    <text evidence="4">Belongs to the major facilitator superfamily.</text>
</comment>
<dbReference type="EMBL" id="BA000018">
    <property type="protein sequence ID" value="BAB43261.1"/>
    <property type="molecule type" value="Genomic_DNA"/>
</dbReference>
<dbReference type="PIR" id="D90012">
    <property type="entry name" value="D90012"/>
</dbReference>
<dbReference type="RefSeq" id="WP_001237506.1">
    <property type="nucleotide sequence ID" value="NC_002745.2"/>
</dbReference>
<dbReference type="SMR" id="Q99S97"/>
<dbReference type="CARD" id="ARO:3007013">
    <property type="molecule name" value="sdrM"/>
    <property type="mechanism identifier" value="ARO:0010000"/>
    <property type="mechanism name" value="antibiotic efflux"/>
</dbReference>
<dbReference type="TCDB" id="2.A.1.3.60">
    <property type="family name" value="the major facilitator superfamily (mfs)"/>
</dbReference>
<dbReference type="EnsemblBacteria" id="BAB43261">
    <property type="protein sequence ID" value="BAB43261"/>
    <property type="gene ID" value="BAB43261"/>
</dbReference>
<dbReference type="KEGG" id="sau:SA1972"/>
<dbReference type="HOGENOM" id="CLU_000960_2_5_9"/>
<dbReference type="GO" id="GO:0005886">
    <property type="term" value="C:plasma membrane"/>
    <property type="evidence" value="ECO:0007669"/>
    <property type="project" value="UniProtKB-SubCell"/>
</dbReference>
<dbReference type="GO" id="GO:0022857">
    <property type="term" value="F:transmembrane transporter activity"/>
    <property type="evidence" value="ECO:0007669"/>
    <property type="project" value="InterPro"/>
</dbReference>
<dbReference type="GO" id="GO:0046677">
    <property type="term" value="P:response to antibiotic"/>
    <property type="evidence" value="ECO:0007669"/>
    <property type="project" value="UniProtKB-KW"/>
</dbReference>
<dbReference type="FunFam" id="1.20.1720.10:FF:000028">
    <property type="entry name" value="Multidrug MFS transporter"/>
    <property type="match status" value="1"/>
</dbReference>
<dbReference type="Gene3D" id="1.20.1250.20">
    <property type="entry name" value="MFS general substrate transporter like domains"/>
    <property type="match status" value="1"/>
</dbReference>
<dbReference type="Gene3D" id="1.20.1720.10">
    <property type="entry name" value="Multidrug resistance protein D"/>
    <property type="match status" value="1"/>
</dbReference>
<dbReference type="InterPro" id="IPR011701">
    <property type="entry name" value="MFS"/>
</dbReference>
<dbReference type="InterPro" id="IPR020846">
    <property type="entry name" value="MFS_dom"/>
</dbReference>
<dbReference type="InterPro" id="IPR053573">
    <property type="entry name" value="MFS_Drug_Efflux_Pump"/>
</dbReference>
<dbReference type="InterPro" id="IPR036259">
    <property type="entry name" value="MFS_trans_sf"/>
</dbReference>
<dbReference type="NCBIfam" id="NF040895">
    <property type="entry name" value="MFS_effux_SdrM"/>
    <property type="match status" value="1"/>
</dbReference>
<dbReference type="PANTHER" id="PTHR23501">
    <property type="entry name" value="MAJOR FACILITATOR SUPERFAMILY"/>
    <property type="match status" value="1"/>
</dbReference>
<dbReference type="PANTHER" id="PTHR23501:SF191">
    <property type="entry name" value="VACUOLAR BASIC AMINO ACID TRANSPORTER 4"/>
    <property type="match status" value="1"/>
</dbReference>
<dbReference type="Pfam" id="PF07690">
    <property type="entry name" value="MFS_1"/>
    <property type="match status" value="1"/>
</dbReference>
<dbReference type="PRINTS" id="PR01036">
    <property type="entry name" value="TCRTETB"/>
</dbReference>
<dbReference type="SUPFAM" id="SSF103473">
    <property type="entry name" value="MFS general substrate transporter"/>
    <property type="match status" value="1"/>
</dbReference>
<dbReference type="PROSITE" id="PS50850">
    <property type="entry name" value="MFS"/>
    <property type="match status" value="1"/>
</dbReference>
<sequence length="447" mass="49410">MRLKSIITVIALILIMFMSAIESSIISLALPTIKQDLNAGNLISLIFTAYFIALVIANPIVGELLSRFKIIYVAIAGLLLFSIGSFMCGLSTNFTMLIISRVIQGFGSGVLMSLSQIVPKLAFEIPLRYKIMGIVGSVWGISSIIGPLLGGGILEFATWHWLFYINIPIAIIAIILVIWTFHFPEEETVAKSKFDTKGLTLFYVFIGLIMFALLNQQLLLLNFLSFILAIVVAMCLFKVEKHVSSPFLPVVEFNRSITLVFITDLLTAICLMGFNLYIPVYLQEQLGLSPLQSGLVIFPLSVAWITLNFNLHRIEAKLSRKVIYLLSFTLLLVSSIIISFGIKLPVLIAFVLILAGLSFGYIYTKDSVIVQEETSPLQMKKMMSFYGLTKNLGASIGSTIMGYLYAIQSGIFGPNLHNVLSAVAVISIGLIVLWVVFFKEQSSQSKE</sequence>
<feature type="chain" id="PRO_0000432887" description="Multidrug efflux pump SdrM">
    <location>
        <begin position="1"/>
        <end position="447"/>
    </location>
</feature>
<feature type="transmembrane region" description="Helical" evidence="1">
    <location>
        <begin position="6"/>
        <end position="26"/>
    </location>
</feature>
<feature type="transmembrane region" description="Helical" evidence="1">
    <location>
        <begin position="42"/>
        <end position="62"/>
    </location>
</feature>
<feature type="transmembrane region" description="Helical" evidence="1">
    <location>
        <begin position="70"/>
        <end position="90"/>
    </location>
</feature>
<feature type="transmembrane region" description="Helical" evidence="1">
    <location>
        <begin position="94"/>
        <end position="114"/>
    </location>
</feature>
<feature type="transmembrane region" description="Helical" evidence="1">
    <location>
        <begin position="134"/>
        <end position="154"/>
    </location>
</feature>
<feature type="transmembrane region" description="Helical" evidence="1">
    <location>
        <begin position="161"/>
        <end position="181"/>
    </location>
</feature>
<feature type="transmembrane region" description="Helical" evidence="1">
    <location>
        <begin position="194"/>
        <end position="214"/>
    </location>
</feature>
<feature type="transmembrane region" description="Helical" evidence="1">
    <location>
        <begin position="217"/>
        <end position="237"/>
    </location>
</feature>
<feature type="transmembrane region" description="Helical" evidence="1">
    <location>
        <begin position="260"/>
        <end position="280"/>
    </location>
</feature>
<feature type="transmembrane region" description="Helical" evidence="1">
    <location>
        <begin position="286"/>
        <end position="306"/>
    </location>
</feature>
<feature type="transmembrane region" description="Helical" evidence="1">
    <location>
        <begin position="323"/>
        <end position="342"/>
    </location>
</feature>
<feature type="transmembrane region" description="Helical" evidence="1">
    <location>
        <begin position="346"/>
        <end position="363"/>
    </location>
</feature>
<feature type="transmembrane region" description="Helical" evidence="1">
    <location>
        <begin position="392"/>
        <end position="412"/>
    </location>
</feature>
<feature type="transmembrane region" description="Helical" evidence="1">
    <location>
        <begin position="418"/>
        <end position="438"/>
    </location>
</feature>
<reference key="1">
    <citation type="journal article" date="2001" name="Lancet">
        <title>Whole genome sequencing of meticillin-resistant Staphylococcus aureus.</title>
        <authorList>
            <person name="Kuroda M."/>
            <person name="Ohta T."/>
            <person name="Uchiyama I."/>
            <person name="Baba T."/>
            <person name="Yuzawa H."/>
            <person name="Kobayashi I."/>
            <person name="Cui L."/>
            <person name="Oguchi A."/>
            <person name="Aoki K."/>
            <person name="Nagai Y."/>
            <person name="Lian J.-Q."/>
            <person name="Ito T."/>
            <person name="Kanamori M."/>
            <person name="Matsumaru H."/>
            <person name="Maruyama A."/>
            <person name="Murakami H."/>
            <person name="Hosoyama A."/>
            <person name="Mizutani-Ui Y."/>
            <person name="Takahashi N.K."/>
            <person name="Sawano T."/>
            <person name="Inoue R."/>
            <person name="Kaito C."/>
            <person name="Sekimizu K."/>
            <person name="Hirakawa H."/>
            <person name="Kuhara S."/>
            <person name="Goto S."/>
            <person name="Yabuzaki J."/>
            <person name="Kanehisa M."/>
            <person name="Yamashita A."/>
            <person name="Oshima K."/>
            <person name="Furuya K."/>
            <person name="Yoshino C."/>
            <person name="Shiba T."/>
            <person name="Hattori M."/>
            <person name="Ogasawara N."/>
            <person name="Hayashi H."/>
            <person name="Hiramatsu K."/>
        </authorList>
    </citation>
    <scope>NUCLEOTIDE SEQUENCE [LARGE SCALE GENOMIC DNA]</scope>
    <source>
        <strain>N315</strain>
    </source>
</reference>
<reference key="2">
    <citation type="journal article" date="2006" name="Biol. Pharm. Bull.">
        <title>Gene cloning and characterization of SdrM, a chromosomally-encoded multidrug efflux pump, from Staphylococcus aureus.</title>
        <authorList>
            <person name="Yamada Y."/>
            <person name="Hideka K."/>
            <person name="Shiota S."/>
            <person name="Kuroda T."/>
            <person name="Tsuchiya T."/>
        </authorList>
    </citation>
    <scope>FUNCTION IN DRUG RESISTANCE</scope>
    <scope>INDUCTION</scope>
    <source>
        <strain>N315</strain>
    </source>
</reference>
<protein>
    <recommendedName>
        <fullName evidence="3">Multidrug efflux pump SdrM</fullName>
    </recommendedName>
</protein>
<accession>Q99S97</accession>
<evidence type="ECO:0000255" key="1"/>
<evidence type="ECO:0000269" key="2">
    <source>
    </source>
</evidence>
<evidence type="ECO:0000303" key="3">
    <source>
    </source>
</evidence>
<evidence type="ECO:0000305" key="4"/>
<evidence type="ECO:0000312" key="5">
    <source>
        <dbReference type="EMBL" id="BAB43261.1"/>
    </source>
</evidence>
<keyword id="KW-0046">Antibiotic resistance</keyword>
<keyword id="KW-1003">Cell membrane</keyword>
<keyword id="KW-0472">Membrane</keyword>
<keyword id="KW-0812">Transmembrane</keyword>
<keyword id="KW-1133">Transmembrane helix</keyword>
<keyword id="KW-0813">Transport</keyword>
<proteinExistence type="evidence at protein level"/>
<gene>
    <name evidence="3" type="primary">sdrM</name>
    <name evidence="5" type="ordered locus">SA1972</name>
</gene>